<dbReference type="EC" id="4.2.2.n2" evidence="1"/>
<dbReference type="EMBL" id="CP000247">
    <property type="protein sequence ID" value="ABG69247.1"/>
    <property type="status" value="ALT_INIT"/>
    <property type="molecule type" value="Genomic_DNA"/>
</dbReference>
<dbReference type="RefSeq" id="WP_001295994.1">
    <property type="nucleotide sequence ID" value="NC_008253.1"/>
</dbReference>
<dbReference type="SMR" id="Q0TII2"/>
<dbReference type="CAZy" id="GH23">
    <property type="family name" value="Glycoside Hydrolase Family 23"/>
</dbReference>
<dbReference type="KEGG" id="ecp:ECP_1236"/>
<dbReference type="HOGENOM" id="CLU_103257_0_0_6"/>
<dbReference type="Proteomes" id="UP000009182">
    <property type="component" value="Chromosome"/>
</dbReference>
<dbReference type="GO" id="GO:0009279">
    <property type="term" value="C:cell outer membrane"/>
    <property type="evidence" value="ECO:0007669"/>
    <property type="project" value="UniProtKB-SubCell"/>
</dbReference>
<dbReference type="GO" id="GO:0008932">
    <property type="term" value="F:lytic endotransglycosylase activity"/>
    <property type="evidence" value="ECO:0007669"/>
    <property type="project" value="InterPro"/>
</dbReference>
<dbReference type="GO" id="GO:0016998">
    <property type="term" value="P:cell wall macromolecule catabolic process"/>
    <property type="evidence" value="ECO:0007669"/>
    <property type="project" value="UniProtKB-UniRule"/>
</dbReference>
<dbReference type="GO" id="GO:0071555">
    <property type="term" value="P:cell wall organization"/>
    <property type="evidence" value="ECO:0007669"/>
    <property type="project" value="UniProtKB-KW"/>
</dbReference>
<dbReference type="GO" id="GO:0000270">
    <property type="term" value="P:peptidoglycan metabolic process"/>
    <property type="evidence" value="ECO:0007669"/>
    <property type="project" value="InterPro"/>
</dbReference>
<dbReference type="CDD" id="cd16893">
    <property type="entry name" value="LT_MltC_MltE"/>
    <property type="match status" value="1"/>
</dbReference>
<dbReference type="FunFam" id="1.10.530.10:FF:000007">
    <property type="entry name" value="Endo-type membrane-bound lytic murein transglycosylase A"/>
    <property type="match status" value="1"/>
</dbReference>
<dbReference type="Gene3D" id="1.10.530.10">
    <property type="match status" value="1"/>
</dbReference>
<dbReference type="HAMAP" id="MF_01381">
    <property type="entry name" value="EmtA"/>
    <property type="match status" value="1"/>
</dbReference>
<dbReference type="InterPro" id="IPR023946">
    <property type="entry name" value="EmtA"/>
</dbReference>
<dbReference type="InterPro" id="IPR023346">
    <property type="entry name" value="Lysozyme-like_dom_sf"/>
</dbReference>
<dbReference type="InterPro" id="IPR000189">
    <property type="entry name" value="Transglyc_AS"/>
</dbReference>
<dbReference type="InterPro" id="IPR008258">
    <property type="entry name" value="Transglycosylase_SLT_dom_1"/>
</dbReference>
<dbReference type="NCBIfam" id="NF012014">
    <property type="entry name" value="PRK15470.1"/>
    <property type="match status" value="1"/>
</dbReference>
<dbReference type="PANTHER" id="PTHR37423:SF4">
    <property type="entry name" value="ENDO-TYPE MEMBRANE-BOUND LYTIC MUREIN TRANSGLYCOSYLASE A"/>
    <property type="match status" value="1"/>
</dbReference>
<dbReference type="PANTHER" id="PTHR37423">
    <property type="entry name" value="SOLUBLE LYTIC MUREIN TRANSGLYCOSYLASE-RELATED"/>
    <property type="match status" value="1"/>
</dbReference>
<dbReference type="Pfam" id="PF01464">
    <property type="entry name" value="SLT"/>
    <property type="match status" value="1"/>
</dbReference>
<dbReference type="SUPFAM" id="SSF53955">
    <property type="entry name" value="Lysozyme-like"/>
    <property type="match status" value="1"/>
</dbReference>
<dbReference type="PROSITE" id="PS51257">
    <property type="entry name" value="PROKAR_LIPOPROTEIN"/>
    <property type="match status" value="1"/>
</dbReference>
<dbReference type="PROSITE" id="PS00922">
    <property type="entry name" value="TRANSGLYCOSYLASE"/>
    <property type="match status" value="1"/>
</dbReference>
<sequence>MKLRWFAFLIVLLAGCSSKHDYTNPPWNAKVPVQRAMQWMPISQKAGAAWGVDPQLITAIIAIESGGNPNAVSKSNAIGLMQIKASTSGRDVYRRMGWSGEPTTSELKNPERNISMGAAYLNILETGPLAGIEDPKVLQYALVVSYANGAGALLRTFSSDRKKAISKINDLDADEFLDHVARNHPAPQAPRYIYKLEQALDAM</sequence>
<gene>
    <name evidence="1" type="primary">emtA</name>
    <name type="ordered locus">ECP_1236</name>
</gene>
<accession>Q0TII2</accession>
<name>EMTA_ECOL5</name>
<organism>
    <name type="scientific">Escherichia coli O6:K15:H31 (strain 536 / UPEC)</name>
    <dbReference type="NCBI Taxonomy" id="362663"/>
    <lineage>
        <taxon>Bacteria</taxon>
        <taxon>Pseudomonadati</taxon>
        <taxon>Pseudomonadota</taxon>
        <taxon>Gammaproteobacteria</taxon>
        <taxon>Enterobacterales</taxon>
        <taxon>Enterobacteriaceae</taxon>
        <taxon>Escherichia</taxon>
    </lineage>
</organism>
<comment type="function">
    <text evidence="1">Murein-degrading enzyme. May play a role in recycling of muropeptides during cell elongation and/or cell division. Preferentially cleaves at a distance of more than two disaccharide units from the ends of the glycan chain.</text>
</comment>
<comment type="catalytic activity">
    <reaction evidence="1">
        <text>Endolytic cleavage of the (1-&gt;4)-beta-glycosidic linkage between N-acetylmuramic acid (MurNAc) and N-acetylglucosamine (GlcNAc) residues in peptidoglycan with concomitant formation of a 1,6-anhydrobond in the MurNAc residue.</text>
        <dbReference type="EC" id="4.2.2.n2"/>
    </reaction>
</comment>
<comment type="subcellular location">
    <subcellularLocation>
        <location evidence="1">Cell outer membrane</location>
        <topology evidence="1">Lipid-anchor</topology>
    </subcellularLocation>
</comment>
<comment type="similarity">
    <text evidence="1">Belongs to the transglycosylase Slt family.</text>
</comment>
<comment type="sequence caution" evidence="2">
    <conflict type="erroneous initiation">
        <sequence resource="EMBL-CDS" id="ABG69247"/>
    </conflict>
</comment>
<keyword id="KW-0998">Cell outer membrane</keyword>
<keyword id="KW-0961">Cell wall biogenesis/degradation</keyword>
<keyword id="KW-0449">Lipoprotein</keyword>
<keyword id="KW-0456">Lyase</keyword>
<keyword id="KW-0472">Membrane</keyword>
<keyword id="KW-0564">Palmitate</keyword>
<keyword id="KW-0732">Signal</keyword>
<feature type="signal peptide" evidence="1">
    <location>
        <begin position="1"/>
        <end position="15"/>
    </location>
</feature>
<feature type="chain" id="PRO_0000312908" description="Endo-type membrane-bound lytic murein transglycosylase A">
    <location>
        <begin position="16"/>
        <end position="203"/>
    </location>
</feature>
<feature type="lipid moiety-binding region" description="N-palmitoyl cysteine" evidence="1">
    <location>
        <position position="16"/>
    </location>
</feature>
<feature type="lipid moiety-binding region" description="S-diacylglycerol cysteine" evidence="1">
    <location>
        <position position="16"/>
    </location>
</feature>
<reference key="1">
    <citation type="journal article" date="2006" name="Mol. Microbiol.">
        <title>Role of pathogenicity island-associated integrases in the genome plasticity of uropathogenic Escherichia coli strain 536.</title>
        <authorList>
            <person name="Hochhut B."/>
            <person name="Wilde C."/>
            <person name="Balling G."/>
            <person name="Middendorf B."/>
            <person name="Dobrindt U."/>
            <person name="Brzuszkiewicz E."/>
            <person name="Gottschalk G."/>
            <person name="Carniel E."/>
            <person name="Hacker J."/>
        </authorList>
    </citation>
    <scope>NUCLEOTIDE SEQUENCE [LARGE SCALE GENOMIC DNA]</scope>
    <source>
        <strain>536 / UPEC</strain>
    </source>
</reference>
<protein>
    <recommendedName>
        <fullName evidence="1">Endo-type membrane-bound lytic murein transglycosylase A</fullName>
        <ecNumber evidence="1">4.2.2.n2</ecNumber>
    </recommendedName>
    <alternativeName>
        <fullName evidence="1">Peptidoglycan lytic endotransglycosylase</fullName>
    </alternativeName>
</protein>
<evidence type="ECO:0000255" key="1">
    <source>
        <dbReference type="HAMAP-Rule" id="MF_01381"/>
    </source>
</evidence>
<evidence type="ECO:0000305" key="2"/>
<proteinExistence type="inferred from homology"/>